<reference key="1">
    <citation type="journal article" date="2008" name="J. Bacteriol.">
        <title>Genome sequence of Staphylococcus aureus strain Newman and comparative analysis of staphylococcal genomes: polymorphism and evolution of two major pathogenicity islands.</title>
        <authorList>
            <person name="Baba T."/>
            <person name="Bae T."/>
            <person name="Schneewind O."/>
            <person name="Takeuchi F."/>
            <person name="Hiramatsu K."/>
        </authorList>
    </citation>
    <scope>NUCLEOTIDE SEQUENCE [LARGE SCALE GENOMIC DNA]</scope>
    <source>
        <strain>Newman</strain>
    </source>
</reference>
<comment type="function">
    <text evidence="1">Part of the high-affinity ATP-driven potassium transport (or Kdp) system, which catalyzes the hydrolysis of ATP coupled with the electrogenic transport of potassium into the cytoplasm. This subunit binds the extracellular potassium ions and delivers the ions to the membrane domain of KdpB through an intramembrane tunnel.</text>
</comment>
<comment type="subunit">
    <text evidence="1">The system is composed of three essential subunits: KdpA, KdpB and KdpC.</text>
</comment>
<comment type="subcellular location">
    <subcellularLocation>
        <location evidence="1">Cell membrane</location>
        <topology evidence="1">Multi-pass membrane protein</topology>
    </subcellularLocation>
</comment>
<comment type="similarity">
    <text evidence="1">Belongs to the KdpA family.</text>
</comment>
<name>KDPA_STAAE</name>
<keyword id="KW-1003">Cell membrane</keyword>
<keyword id="KW-0406">Ion transport</keyword>
<keyword id="KW-0472">Membrane</keyword>
<keyword id="KW-0630">Potassium</keyword>
<keyword id="KW-0633">Potassium transport</keyword>
<keyword id="KW-0812">Transmembrane</keyword>
<keyword id="KW-1133">Transmembrane helix</keyword>
<keyword id="KW-0813">Transport</keyword>
<proteinExistence type="inferred from homology"/>
<sequence>MEIILFLTMMVMITYVFSGYLYRVALVQSSRVDLIFTRFENMCFKIIGTDLEHMSAKTYVKHFLAFNGFMGFITFVLLIVQQWLFLNPNHNLNQSIDLAFNTAISFLTNSNLQHYNGESDVTYLTQMIVMTYLMFTSSASGYAVCIAMLRRLTGLTNIIGNFYQDIVRFIVRVLLPLSCLISILLMTQGVPQTLHANLMIRTLSGHIQHIAFGPIASLESIKHLGTNGGGFLAGNSATPFENPNIWSNFIEMGSMMLLPMSMLFLFGRMLSRHGKRVHRHALILFVAMFFIFIAILTLTMWSEYRGNPILANLGIYGPNMEGKEVRFGAGLSALFTVITTAFTTGSVNNMHDSLTPIGGLGPMVLMMLNVVFGGEGVGLMNLLIFVLLTVFICSLMVGKTPEYLNMPIGAREMKCIVLVFLIHPILILVFSALAFMIPGASESITNPSFHGISQVMYEMTSAAANNGSGFEGLKDDTTFWNISTGIIMLLSRYIPIILQLMIASSLVNKKSYHQDKYTIAIDKPYFGVSLIVFIVLLSGLTFIPVLLLGPIGEFLTLK</sequence>
<accession>A6QIS2</accession>
<evidence type="ECO:0000255" key="1">
    <source>
        <dbReference type="HAMAP-Rule" id="MF_00275"/>
    </source>
</evidence>
<organism>
    <name type="scientific">Staphylococcus aureus (strain Newman)</name>
    <dbReference type="NCBI Taxonomy" id="426430"/>
    <lineage>
        <taxon>Bacteria</taxon>
        <taxon>Bacillati</taxon>
        <taxon>Bacillota</taxon>
        <taxon>Bacilli</taxon>
        <taxon>Bacillales</taxon>
        <taxon>Staphylococcaceae</taxon>
        <taxon>Staphylococcus</taxon>
    </lineage>
</organism>
<feature type="chain" id="PRO_1000071926" description="Potassium-transporting ATPase potassium-binding subunit">
    <location>
        <begin position="1"/>
        <end position="558"/>
    </location>
</feature>
<feature type="transmembrane region" description="Helical" evidence="1">
    <location>
        <begin position="1"/>
        <end position="21"/>
    </location>
</feature>
<feature type="transmembrane region" description="Helical" evidence="1">
    <location>
        <begin position="66"/>
        <end position="86"/>
    </location>
</feature>
<feature type="transmembrane region" description="Helical" evidence="1">
    <location>
        <begin position="127"/>
        <end position="147"/>
    </location>
</feature>
<feature type="transmembrane region" description="Helical" evidence="1">
    <location>
        <begin position="166"/>
        <end position="186"/>
    </location>
</feature>
<feature type="transmembrane region" description="Helical" evidence="1">
    <location>
        <begin position="245"/>
        <end position="265"/>
    </location>
</feature>
<feature type="transmembrane region" description="Helical" evidence="1">
    <location>
        <begin position="281"/>
        <end position="301"/>
    </location>
</feature>
<feature type="transmembrane region" description="Helical" evidence="1">
    <location>
        <begin position="327"/>
        <end position="347"/>
    </location>
</feature>
<feature type="transmembrane region" description="Helical" evidence="1">
    <location>
        <begin position="354"/>
        <end position="374"/>
    </location>
</feature>
<feature type="transmembrane region" description="Helical" evidence="1">
    <location>
        <begin position="377"/>
        <end position="397"/>
    </location>
</feature>
<feature type="transmembrane region" description="Helical" evidence="1">
    <location>
        <begin position="416"/>
        <end position="436"/>
    </location>
</feature>
<feature type="transmembrane region" description="Helical" evidence="1">
    <location>
        <begin position="482"/>
        <end position="502"/>
    </location>
</feature>
<feature type="transmembrane region" description="Helical" evidence="1">
    <location>
        <begin position="531"/>
        <end position="551"/>
    </location>
</feature>
<gene>
    <name evidence="1" type="primary">kdpA</name>
    <name type="ordered locus">NWMN_1982</name>
</gene>
<dbReference type="EMBL" id="AP009351">
    <property type="protein sequence ID" value="BAF68254.1"/>
    <property type="molecule type" value="Genomic_DNA"/>
</dbReference>
<dbReference type="RefSeq" id="WP_000402656.1">
    <property type="nucleotide sequence ID" value="NZ_JBBIAE010000008.1"/>
</dbReference>
<dbReference type="SMR" id="A6QIS2"/>
<dbReference type="KEGG" id="sae:NWMN_1982"/>
<dbReference type="HOGENOM" id="CLU_018614_3_0_9"/>
<dbReference type="Proteomes" id="UP000006386">
    <property type="component" value="Chromosome"/>
</dbReference>
<dbReference type="GO" id="GO:0005886">
    <property type="term" value="C:plasma membrane"/>
    <property type="evidence" value="ECO:0007669"/>
    <property type="project" value="UniProtKB-SubCell"/>
</dbReference>
<dbReference type="GO" id="GO:0008556">
    <property type="term" value="F:P-type potassium transmembrane transporter activity"/>
    <property type="evidence" value="ECO:0007669"/>
    <property type="project" value="InterPro"/>
</dbReference>
<dbReference type="GO" id="GO:0030955">
    <property type="term" value="F:potassium ion binding"/>
    <property type="evidence" value="ECO:0007669"/>
    <property type="project" value="UniProtKB-UniRule"/>
</dbReference>
<dbReference type="HAMAP" id="MF_00275">
    <property type="entry name" value="KdpA"/>
    <property type="match status" value="1"/>
</dbReference>
<dbReference type="InterPro" id="IPR004623">
    <property type="entry name" value="KdpA"/>
</dbReference>
<dbReference type="NCBIfam" id="TIGR00680">
    <property type="entry name" value="kdpA"/>
    <property type="match status" value="1"/>
</dbReference>
<dbReference type="PANTHER" id="PTHR30607">
    <property type="entry name" value="POTASSIUM-TRANSPORTING ATPASE A CHAIN"/>
    <property type="match status" value="1"/>
</dbReference>
<dbReference type="PANTHER" id="PTHR30607:SF2">
    <property type="entry name" value="POTASSIUM-TRANSPORTING ATPASE POTASSIUM-BINDING SUBUNIT"/>
    <property type="match status" value="1"/>
</dbReference>
<dbReference type="Pfam" id="PF03814">
    <property type="entry name" value="KdpA"/>
    <property type="match status" value="1"/>
</dbReference>
<dbReference type="PIRSF" id="PIRSF001294">
    <property type="entry name" value="K_ATPaseA"/>
    <property type="match status" value="1"/>
</dbReference>
<protein>
    <recommendedName>
        <fullName evidence="1">Potassium-transporting ATPase potassium-binding subunit</fullName>
    </recommendedName>
    <alternativeName>
        <fullName evidence="1">ATP phosphohydrolase [potassium-transporting] A chain</fullName>
    </alternativeName>
    <alternativeName>
        <fullName evidence="1">Potassium-binding and translocating subunit A</fullName>
    </alternativeName>
    <alternativeName>
        <fullName evidence="1">Potassium-translocating ATPase A chain</fullName>
    </alternativeName>
</protein>